<dbReference type="EC" id="2.1.2.1" evidence="1"/>
<dbReference type="EMBL" id="CP000159">
    <property type="protein sequence ID" value="ABC45480.1"/>
    <property type="molecule type" value="Genomic_DNA"/>
</dbReference>
<dbReference type="RefSeq" id="WP_011403541.1">
    <property type="nucleotide sequence ID" value="NC_007677.1"/>
</dbReference>
<dbReference type="RefSeq" id="YP_444912.1">
    <property type="nucleotide sequence ID" value="NC_007677.1"/>
</dbReference>
<dbReference type="SMR" id="Q2S4G9"/>
<dbReference type="STRING" id="309807.SRU_0775"/>
<dbReference type="EnsemblBacteria" id="ABC45480">
    <property type="protein sequence ID" value="ABC45480"/>
    <property type="gene ID" value="SRU_0775"/>
</dbReference>
<dbReference type="GeneID" id="83727699"/>
<dbReference type="KEGG" id="sru:SRU_0775"/>
<dbReference type="PATRIC" id="fig|309807.25.peg.800"/>
<dbReference type="eggNOG" id="COG0112">
    <property type="taxonomic scope" value="Bacteria"/>
</dbReference>
<dbReference type="HOGENOM" id="CLU_022477_2_1_10"/>
<dbReference type="OrthoDB" id="9803846at2"/>
<dbReference type="UniPathway" id="UPA00193"/>
<dbReference type="UniPathway" id="UPA00288">
    <property type="reaction ID" value="UER01023"/>
</dbReference>
<dbReference type="Proteomes" id="UP000008674">
    <property type="component" value="Chromosome"/>
</dbReference>
<dbReference type="GO" id="GO:0005829">
    <property type="term" value="C:cytosol"/>
    <property type="evidence" value="ECO:0007669"/>
    <property type="project" value="TreeGrafter"/>
</dbReference>
<dbReference type="GO" id="GO:0004372">
    <property type="term" value="F:glycine hydroxymethyltransferase activity"/>
    <property type="evidence" value="ECO:0007669"/>
    <property type="project" value="UniProtKB-UniRule"/>
</dbReference>
<dbReference type="GO" id="GO:0030170">
    <property type="term" value="F:pyridoxal phosphate binding"/>
    <property type="evidence" value="ECO:0007669"/>
    <property type="project" value="UniProtKB-UniRule"/>
</dbReference>
<dbReference type="GO" id="GO:0019264">
    <property type="term" value="P:glycine biosynthetic process from serine"/>
    <property type="evidence" value="ECO:0007669"/>
    <property type="project" value="UniProtKB-UniRule"/>
</dbReference>
<dbReference type="GO" id="GO:0035999">
    <property type="term" value="P:tetrahydrofolate interconversion"/>
    <property type="evidence" value="ECO:0007669"/>
    <property type="project" value="UniProtKB-UniRule"/>
</dbReference>
<dbReference type="CDD" id="cd00378">
    <property type="entry name" value="SHMT"/>
    <property type="match status" value="1"/>
</dbReference>
<dbReference type="FunFam" id="3.40.640.10:FF:000001">
    <property type="entry name" value="Serine hydroxymethyltransferase"/>
    <property type="match status" value="1"/>
</dbReference>
<dbReference type="FunFam" id="3.90.1150.10:FF:000003">
    <property type="entry name" value="Serine hydroxymethyltransferase"/>
    <property type="match status" value="1"/>
</dbReference>
<dbReference type="Gene3D" id="3.90.1150.10">
    <property type="entry name" value="Aspartate Aminotransferase, domain 1"/>
    <property type="match status" value="1"/>
</dbReference>
<dbReference type="Gene3D" id="3.40.640.10">
    <property type="entry name" value="Type I PLP-dependent aspartate aminotransferase-like (Major domain)"/>
    <property type="match status" value="1"/>
</dbReference>
<dbReference type="HAMAP" id="MF_00051">
    <property type="entry name" value="SHMT"/>
    <property type="match status" value="1"/>
</dbReference>
<dbReference type="InterPro" id="IPR015424">
    <property type="entry name" value="PyrdxlP-dep_Trfase"/>
</dbReference>
<dbReference type="InterPro" id="IPR015421">
    <property type="entry name" value="PyrdxlP-dep_Trfase_major"/>
</dbReference>
<dbReference type="InterPro" id="IPR015422">
    <property type="entry name" value="PyrdxlP-dep_Trfase_small"/>
</dbReference>
<dbReference type="InterPro" id="IPR001085">
    <property type="entry name" value="Ser_HO-MeTrfase"/>
</dbReference>
<dbReference type="InterPro" id="IPR049943">
    <property type="entry name" value="Ser_HO-MeTrfase-like"/>
</dbReference>
<dbReference type="InterPro" id="IPR019798">
    <property type="entry name" value="Ser_HO-MeTrfase_PLP_BS"/>
</dbReference>
<dbReference type="InterPro" id="IPR039429">
    <property type="entry name" value="SHMT-like_dom"/>
</dbReference>
<dbReference type="NCBIfam" id="NF000586">
    <property type="entry name" value="PRK00011.1"/>
    <property type="match status" value="1"/>
</dbReference>
<dbReference type="PANTHER" id="PTHR11680">
    <property type="entry name" value="SERINE HYDROXYMETHYLTRANSFERASE"/>
    <property type="match status" value="1"/>
</dbReference>
<dbReference type="PANTHER" id="PTHR11680:SF35">
    <property type="entry name" value="SERINE HYDROXYMETHYLTRANSFERASE 1"/>
    <property type="match status" value="1"/>
</dbReference>
<dbReference type="Pfam" id="PF00464">
    <property type="entry name" value="SHMT"/>
    <property type="match status" value="1"/>
</dbReference>
<dbReference type="PIRSF" id="PIRSF000412">
    <property type="entry name" value="SHMT"/>
    <property type="match status" value="1"/>
</dbReference>
<dbReference type="SUPFAM" id="SSF53383">
    <property type="entry name" value="PLP-dependent transferases"/>
    <property type="match status" value="1"/>
</dbReference>
<dbReference type="PROSITE" id="PS00096">
    <property type="entry name" value="SHMT"/>
    <property type="match status" value="1"/>
</dbReference>
<proteinExistence type="inferred from homology"/>
<organism>
    <name type="scientific">Salinibacter ruber (strain DSM 13855 / M31)</name>
    <dbReference type="NCBI Taxonomy" id="309807"/>
    <lineage>
        <taxon>Bacteria</taxon>
        <taxon>Pseudomonadati</taxon>
        <taxon>Rhodothermota</taxon>
        <taxon>Rhodothermia</taxon>
        <taxon>Rhodothermales</taxon>
        <taxon>Salinibacteraceae</taxon>
        <taxon>Salinibacter</taxon>
    </lineage>
</organism>
<sequence>MSALRNQDPEIHDVIQKEVQRQNDGLELIASENFASRAVMEAMGTALTNKYAEGLPGKRYYGGCEVVDRAEELARERAKELYDCDWVNVQPHAGAQANSAVYLTLLDPGDTFLGLDLSHGGHLTHGSPVNFSGILYEAEYYGVEEETGRIDMNRVRDRAKEVQPKMISIGASAYPRDFDYEAFREIADEVGAFLWMDMAHTAGLIAGGVLNDPMPHTHVVTTTTHKTLRGPRGGMILLGDDYENPMGKTARKSGRTKMMSELLDSAVFPGTQGGPLMHVIAAKAVGFKEALKPSFAEYTQQVVDNAQAMGAELRERGYDLVSDGTDNHLVLIDLRNKGLTGKEAEQALEAAGITANKNMVPFDDKSPFVTSGLRLGTPAMTTRGFGPDEFAHVAEMIDRVLQDPEDEDTQAAVEREVKALCDQHPLYDVAMA</sequence>
<comment type="function">
    <text evidence="1">Catalyzes the reversible interconversion of serine and glycine with tetrahydrofolate (THF) serving as the one-carbon carrier. This reaction serves as the major source of one-carbon groups required for the biosynthesis of purines, thymidylate, methionine, and other important biomolecules. Also exhibits THF-independent aldolase activity toward beta-hydroxyamino acids, producing glycine and aldehydes, via a retro-aldol mechanism.</text>
</comment>
<comment type="catalytic activity">
    <reaction evidence="1">
        <text>(6R)-5,10-methylene-5,6,7,8-tetrahydrofolate + glycine + H2O = (6S)-5,6,7,8-tetrahydrofolate + L-serine</text>
        <dbReference type="Rhea" id="RHEA:15481"/>
        <dbReference type="ChEBI" id="CHEBI:15377"/>
        <dbReference type="ChEBI" id="CHEBI:15636"/>
        <dbReference type="ChEBI" id="CHEBI:33384"/>
        <dbReference type="ChEBI" id="CHEBI:57305"/>
        <dbReference type="ChEBI" id="CHEBI:57453"/>
        <dbReference type="EC" id="2.1.2.1"/>
    </reaction>
</comment>
<comment type="cofactor">
    <cofactor evidence="1">
        <name>pyridoxal 5'-phosphate</name>
        <dbReference type="ChEBI" id="CHEBI:597326"/>
    </cofactor>
</comment>
<comment type="pathway">
    <text evidence="1">One-carbon metabolism; tetrahydrofolate interconversion.</text>
</comment>
<comment type="pathway">
    <text evidence="1">Amino-acid biosynthesis; glycine biosynthesis; glycine from L-serine: step 1/1.</text>
</comment>
<comment type="subunit">
    <text evidence="1">Homodimer.</text>
</comment>
<comment type="subcellular location">
    <subcellularLocation>
        <location evidence="1">Cytoplasm</location>
    </subcellularLocation>
</comment>
<comment type="similarity">
    <text evidence="1">Belongs to the SHMT family.</text>
</comment>
<evidence type="ECO:0000255" key="1">
    <source>
        <dbReference type="HAMAP-Rule" id="MF_00051"/>
    </source>
</evidence>
<keyword id="KW-0028">Amino-acid biosynthesis</keyword>
<keyword id="KW-0963">Cytoplasm</keyword>
<keyword id="KW-0554">One-carbon metabolism</keyword>
<keyword id="KW-0663">Pyridoxal phosphate</keyword>
<keyword id="KW-1185">Reference proteome</keyword>
<keyword id="KW-0808">Transferase</keyword>
<gene>
    <name evidence="1" type="primary">glyA</name>
    <name type="ordered locus">SRU_0775</name>
</gene>
<reference key="1">
    <citation type="journal article" date="2005" name="Proc. Natl. Acad. Sci. U.S.A.">
        <title>The genome of Salinibacter ruber: convergence and gene exchange among hyperhalophilic bacteria and archaea.</title>
        <authorList>
            <person name="Mongodin E.F."/>
            <person name="Nelson K.E."/>
            <person name="Daugherty S."/>
            <person name="DeBoy R.T."/>
            <person name="Wister J."/>
            <person name="Khouri H."/>
            <person name="Weidman J."/>
            <person name="Walsh D.A."/>
            <person name="Papke R.T."/>
            <person name="Sanchez Perez G."/>
            <person name="Sharma A.K."/>
            <person name="Nesbo C.L."/>
            <person name="MacLeod D."/>
            <person name="Bapteste E."/>
            <person name="Doolittle W.F."/>
            <person name="Charlebois R.L."/>
            <person name="Legault B."/>
            <person name="Rodriguez-Valera F."/>
        </authorList>
    </citation>
    <scope>NUCLEOTIDE SEQUENCE [LARGE SCALE GENOMIC DNA]</scope>
    <source>
        <strain>DSM 13855 / CECT 5946 / M31</strain>
    </source>
</reference>
<accession>Q2S4G9</accession>
<feature type="chain" id="PRO_0000235018" description="Serine hydroxymethyltransferase">
    <location>
        <begin position="1"/>
        <end position="432"/>
    </location>
</feature>
<feature type="binding site" evidence="1">
    <location>
        <position position="117"/>
    </location>
    <ligand>
        <name>(6S)-5,6,7,8-tetrahydrofolate</name>
        <dbReference type="ChEBI" id="CHEBI:57453"/>
    </ligand>
</feature>
<feature type="binding site" evidence="1">
    <location>
        <begin position="121"/>
        <end position="123"/>
    </location>
    <ligand>
        <name>(6S)-5,6,7,8-tetrahydrofolate</name>
        <dbReference type="ChEBI" id="CHEBI:57453"/>
    </ligand>
</feature>
<feature type="binding site" evidence="1">
    <location>
        <begin position="366"/>
        <end position="368"/>
    </location>
    <ligand>
        <name>(6S)-5,6,7,8-tetrahydrofolate</name>
        <dbReference type="ChEBI" id="CHEBI:57453"/>
    </ligand>
</feature>
<feature type="site" description="Plays an important role in substrate specificity" evidence="1">
    <location>
        <position position="225"/>
    </location>
</feature>
<feature type="modified residue" description="N6-(pyridoxal phosphate)lysine" evidence="1">
    <location>
        <position position="226"/>
    </location>
</feature>
<protein>
    <recommendedName>
        <fullName evidence="1">Serine hydroxymethyltransferase</fullName>
        <shortName evidence="1">SHMT</shortName>
        <shortName evidence="1">Serine methylase</shortName>
        <ecNumber evidence="1">2.1.2.1</ecNumber>
    </recommendedName>
</protein>
<name>GLYA_SALRD</name>